<proteinExistence type="inferred from homology"/>
<evidence type="ECO:0000255" key="1">
    <source>
        <dbReference type="HAMAP-Rule" id="MF_01451"/>
    </source>
</evidence>
<reference key="1">
    <citation type="submission" date="2008-06" db="EMBL/GenBank/DDBJ databases">
        <title>Lactobacillus casei BL23 complete genome sequence.</title>
        <authorList>
            <person name="Maze A."/>
            <person name="Boel G."/>
            <person name="Bourand A."/>
            <person name="Loux V."/>
            <person name="Gibrat J.F."/>
            <person name="Zuniga M."/>
            <person name="Hartke A."/>
            <person name="Deutscher J."/>
        </authorList>
    </citation>
    <scope>NUCLEOTIDE SEQUENCE [LARGE SCALE GENOMIC DNA]</scope>
    <source>
        <strain>BL23</strain>
    </source>
</reference>
<feature type="chain" id="PRO_0000379278" description="ATP-dependent helicase/nuclease subunit A">
    <location>
        <begin position="1"/>
        <end position="1234"/>
    </location>
</feature>
<feature type="domain" description="UvrD-like helicase ATP-binding" evidence="1">
    <location>
        <begin position="2"/>
        <end position="475"/>
    </location>
</feature>
<feature type="domain" description="UvrD-like helicase C-terminal" evidence="1">
    <location>
        <begin position="507"/>
        <end position="806"/>
    </location>
</feature>
<feature type="binding site" evidence="1">
    <location>
        <begin position="23"/>
        <end position="30"/>
    </location>
    <ligand>
        <name>ATP</name>
        <dbReference type="ChEBI" id="CHEBI:30616"/>
    </ligand>
</feature>
<dbReference type="EC" id="3.1.-.-" evidence="1"/>
<dbReference type="EC" id="5.6.2.4" evidence="1"/>
<dbReference type="EMBL" id="FM177140">
    <property type="protein sequence ID" value="CAQ66792.1"/>
    <property type="molecule type" value="Genomic_DNA"/>
</dbReference>
<dbReference type="SMR" id="B3WEJ1"/>
<dbReference type="KEGG" id="lcb:LCABL_17110"/>
<dbReference type="HOGENOM" id="CLU_001114_3_1_9"/>
<dbReference type="GO" id="GO:0005829">
    <property type="term" value="C:cytosol"/>
    <property type="evidence" value="ECO:0007669"/>
    <property type="project" value="TreeGrafter"/>
</dbReference>
<dbReference type="GO" id="GO:0033202">
    <property type="term" value="C:DNA helicase complex"/>
    <property type="evidence" value="ECO:0007669"/>
    <property type="project" value="TreeGrafter"/>
</dbReference>
<dbReference type="GO" id="GO:0043138">
    <property type="term" value="F:3'-5' DNA helicase activity"/>
    <property type="evidence" value="ECO:0007669"/>
    <property type="project" value="UniProtKB-UniRule"/>
</dbReference>
<dbReference type="GO" id="GO:0008408">
    <property type="term" value="F:3'-5' exonuclease activity"/>
    <property type="evidence" value="ECO:0007669"/>
    <property type="project" value="UniProtKB-UniRule"/>
</dbReference>
<dbReference type="GO" id="GO:0005524">
    <property type="term" value="F:ATP binding"/>
    <property type="evidence" value="ECO:0007669"/>
    <property type="project" value="UniProtKB-UniRule"/>
</dbReference>
<dbReference type="GO" id="GO:0016887">
    <property type="term" value="F:ATP hydrolysis activity"/>
    <property type="evidence" value="ECO:0007669"/>
    <property type="project" value="RHEA"/>
</dbReference>
<dbReference type="GO" id="GO:0003690">
    <property type="term" value="F:double-stranded DNA binding"/>
    <property type="evidence" value="ECO:0007669"/>
    <property type="project" value="UniProtKB-UniRule"/>
</dbReference>
<dbReference type="GO" id="GO:0000724">
    <property type="term" value="P:double-strand break repair via homologous recombination"/>
    <property type="evidence" value="ECO:0007669"/>
    <property type="project" value="UniProtKB-UniRule"/>
</dbReference>
<dbReference type="Gene3D" id="3.90.320.10">
    <property type="match status" value="1"/>
</dbReference>
<dbReference type="Gene3D" id="3.40.50.300">
    <property type="entry name" value="P-loop containing nucleotide triphosphate hydrolases"/>
    <property type="match status" value="4"/>
</dbReference>
<dbReference type="HAMAP" id="MF_01451">
    <property type="entry name" value="AddA"/>
    <property type="match status" value="1"/>
</dbReference>
<dbReference type="InterPro" id="IPR014152">
    <property type="entry name" value="AddA"/>
</dbReference>
<dbReference type="InterPro" id="IPR014017">
    <property type="entry name" value="DNA_helicase_UvrD-like_C"/>
</dbReference>
<dbReference type="InterPro" id="IPR000212">
    <property type="entry name" value="DNA_helicase_UvrD/REP"/>
</dbReference>
<dbReference type="InterPro" id="IPR027417">
    <property type="entry name" value="P-loop_NTPase"/>
</dbReference>
<dbReference type="InterPro" id="IPR011604">
    <property type="entry name" value="PDDEXK-like_dom_sf"/>
</dbReference>
<dbReference type="InterPro" id="IPR038726">
    <property type="entry name" value="PDDEXK_AddAB-type"/>
</dbReference>
<dbReference type="InterPro" id="IPR011335">
    <property type="entry name" value="Restrct_endonuc-II-like"/>
</dbReference>
<dbReference type="InterPro" id="IPR014016">
    <property type="entry name" value="UvrD-like_ATP-bd"/>
</dbReference>
<dbReference type="NCBIfam" id="TIGR02785">
    <property type="entry name" value="addA_Gpos"/>
    <property type="match status" value="1"/>
</dbReference>
<dbReference type="PANTHER" id="PTHR11070:SF48">
    <property type="entry name" value="ATP-DEPENDENT HELICASE_NUCLEASE SUBUNIT A"/>
    <property type="match status" value="1"/>
</dbReference>
<dbReference type="PANTHER" id="PTHR11070">
    <property type="entry name" value="UVRD / RECB / PCRA DNA HELICASE FAMILY MEMBER"/>
    <property type="match status" value="1"/>
</dbReference>
<dbReference type="Pfam" id="PF12705">
    <property type="entry name" value="PDDEXK_1"/>
    <property type="match status" value="1"/>
</dbReference>
<dbReference type="Pfam" id="PF00580">
    <property type="entry name" value="UvrD-helicase"/>
    <property type="match status" value="1"/>
</dbReference>
<dbReference type="Pfam" id="PF13361">
    <property type="entry name" value="UvrD_C"/>
    <property type="match status" value="1"/>
</dbReference>
<dbReference type="SUPFAM" id="SSF52540">
    <property type="entry name" value="P-loop containing nucleoside triphosphate hydrolases"/>
    <property type="match status" value="1"/>
</dbReference>
<dbReference type="SUPFAM" id="SSF52980">
    <property type="entry name" value="Restriction endonuclease-like"/>
    <property type="match status" value="1"/>
</dbReference>
<dbReference type="PROSITE" id="PS51198">
    <property type="entry name" value="UVRD_HELICASE_ATP_BIND"/>
    <property type="match status" value="1"/>
</dbReference>
<dbReference type="PROSITE" id="PS51217">
    <property type="entry name" value="UVRD_HELICASE_CTER"/>
    <property type="match status" value="1"/>
</dbReference>
<name>ADDA_LACCB</name>
<comment type="function">
    <text evidence="1">The heterodimer acts as both an ATP-dependent DNA helicase and an ATP-dependent, dual-direction single-stranded exonuclease. Recognizes the chi site generating a DNA molecule suitable for the initiation of homologous recombination. The AddA nuclease domain is required for chi fragment generation; this subunit has the helicase and 3' -&gt; 5' nuclease activities.</text>
</comment>
<comment type="catalytic activity">
    <reaction evidence="1">
        <text>Couples ATP hydrolysis with the unwinding of duplex DNA by translocating in the 3'-5' direction.</text>
        <dbReference type="EC" id="5.6.2.4"/>
    </reaction>
</comment>
<comment type="catalytic activity">
    <reaction evidence="1">
        <text>ATP + H2O = ADP + phosphate + H(+)</text>
        <dbReference type="Rhea" id="RHEA:13065"/>
        <dbReference type="ChEBI" id="CHEBI:15377"/>
        <dbReference type="ChEBI" id="CHEBI:15378"/>
        <dbReference type="ChEBI" id="CHEBI:30616"/>
        <dbReference type="ChEBI" id="CHEBI:43474"/>
        <dbReference type="ChEBI" id="CHEBI:456216"/>
        <dbReference type="EC" id="5.6.2.4"/>
    </reaction>
</comment>
<comment type="cofactor">
    <cofactor evidence="1">
        <name>Mg(2+)</name>
        <dbReference type="ChEBI" id="CHEBI:18420"/>
    </cofactor>
</comment>
<comment type="subunit">
    <text evidence="1">Heterodimer of AddA and AddB/RexB.</text>
</comment>
<comment type="similarity">
    <text evidence="1">Belongs to the helicase family. AddA subfamily.</text>
</comment>
<keyword id="KW-0067">ATP-binding</keyword>
<keyword id="KW-0227">DNA damage</keyword>
<keyword id="KW-0234">DNA repair</keyword>
<keyword id="KW-0238">DNA-binding</keyword>
<keyword id="KW-0269">Exonuclease</keyword>
<keyword id="KW-0347">Helicase</keyword>
<keyword id="KW-0378">Hydrolase</keyword>
<keyword id="KW-0413">Isomerase</keyword>
<keyword id="KW-0540">Nuclease</keyword>
<keyword id="KW-0547">Nucleotide-binding</keyword>
<gene>
    <name evidence="1" type="primary">addA</name>
    <name type="synonym">rexA</name>
    <name type="ordered locus">LCABL_17110</name>
</gene>
<accession>B3WEJ1</accession>
<sequence>MTQFTTSQQAAITHDGHDVLVSASAGSGKTTVLVERIIQKILKQHADITRMLIVTFTRAATAEMRTKIQTALKKALTERRHELSGEDRRHLANQIAMVNAAKISTLDAFSLQIVQTYYYVIDLDPGFRLLTDETERYMLQERVWDDLREQLYASDEAPAFEQLTANFSGDRDDSGLQDLMFELIRQAGATTDPKAYLEGLATPYAPEKWEATFSQQIWPRVKGQLLQIATSLTQASALANQLPNPIWYQQIQADLAPLQTLLETNAPTYDTVRSVLISHEFAAWSRISKGLDDADKDTKNAAKDLRDAAKKTWQNKLAPTFALAAEQIGDLLREAQPLVATLANVALKFEDALTAEKAARHVQDYSDIAHNALRILQQKDPQTGAPIADNYRASFDEVMVDEYQDISPLQEALLAAVSTTTPGDRFMVGDVKQSIYGFRLADPQLFIHKYQTFQDAPTDPAAPERIILAENFRSTKNVLAFTNLIFSQIMDPEVGDLSYDNAAALRYGALDYGDAHPAVKVLLYSKATSDEDSSDASELPGDADDNEPVDIATGQTQLVLAEIQRLINDPDAQLWDRQAQEYRRIHYRDITLLTRQTSQNSLIQTQFAAAGVPLFVADTKNFFKTTELMVMLALLKVIDNQKQDIPLVAVLRSPIVGLSADQLALIRLAAKQVPYYDAVTAFLQAEPKTPLAQRTHDMLTHFFNQLSHFRDLARENDLVTLLWAIYQDTGFLDYVGGTPGGSQRQANLQALIDRARTYEAGGFKGLFAFIHFITLMQKQDQDLAMPAQVDPDNDAVKLMTIHKSKGLEFPVVFLMQANKHFNMRDQTGTAILTKQGIGIKWLDPETRVEYELPQYQAAKAARQNQTLAEEMRLLYVALTRAQQRLYVVGATMSGNQLTSADKTVEKWAAAAEGEARVLAPQVRSGATSYLDWIGPALIRHPQARGLAETTIKPALVGDETEFTIEIDVNPQVTPTATPEKVSDDSGTMVDLSAWFKKAYPFQAATTTTGFQSVSEIKRAFDDPDTIDLVNADRFLGPKPPMRDLTAPAFLTETPSGISPAAIGTATHLLLQLVDLAKPITMASLRALRDQLTTKQVIAVDVAKHIDLTALIRFFETDLGRLLLAKPQQVHREVPFSMLLPADQVFEALADDPGEDVLIHGIIDGYVSDEQGVTLFDYKTDHNPNTAVLVDRYRGQLNLYAQALQDLQPKPVLHRYLVFLRTGTVVDLVASGAGK</sequence>
<organism>
    <name type="scientific">Lacticaseibacillus casei (strain BL23)</name>
    <name type="common">Lactobacillus casei</name>
    <dbReference type="NCBI Taxonomy" id="543734"/>
    <lineage>
        <taxon>Bacteria</taxon>
        <taxon>Bacillati</taxon>
        <taxon>Bacillota</taxon>
        <taxon>Bacilli</taxon>
        <taxon>Lactobacillales</taxon>
        <taxon>Lactobacillaceae</taxon>
        <taxon>Lacticaseibacillus</taxon>
    </lineage>
</organism>
<protein>
    <recommendedName>
        <fullName evidence="1">ATP-dependent helicase/nuclease subunit A</fullName>
        <ecNumber evidence="1">3.1.-.-</ecNumber>
        <ecNumber evidence="1">5.6.2.4</ecNumber>
    </recommendedName>
    <alternativeName>
        <fullName evidence="1">ATP-dependent helicase/nuclease AddA</fullName>
    </alternativeName>
    <alternativeName>
        <fullName evidence="1">DNA 3'-5' helicase AddA</fullName>
    </alternativeName>
</protein>